<comment type="similarity">
    <text evidence="1">Belongs to the mimivirus R69 family.</text>
</comment>
<feature type="chain" id="PRO_0000071199" description="Uncharacterized protein R69">
    <location>
        <begin position="1"/>
        <end position="312"/>
    </location>
</feature>
<gene>
    <name type="ordered locus">MIMI_R69</name>
</gene>
<protein>
    <recommendedName>
        <fullName>Uncharacterized protein R69</fullName>
    </recommendedName>
</protein>
<keyword id="KW-1185">Reference proteome</keyword>
<organism>
    <name type="scientific">Acanthamoeba polyphaga mimivirus</name>
    <name type="common">APMV</name>
    <dbReference type="NCBI Taxonomy" id="212035"/>
    <lineage>
        <taxon>Viruses</taxon>
        <taxon>Varidnaviria</taxon>
        <taxon>Bamfordvirae</taxon>
        <taxon>Nucleocytoviricota</taxon>
        <taxon>Megaviricetes</taxon>
        <taxon>Imitervirales</taxon>
        <taxon>Mimiviridae</taxon>
        <taxon>Megamimivirinae</taxon>
        <taxon>Mimivirus</taxon>
        <taxon>Mimivirus bradfordmassiliense</taxon>
    </lineage>
</organism>
<organismHost>
    <name type="scientific">Acanthamoeba polyphaga</name>
    <name type="common">Amoeba</name>
    <dbReference type="NCBI Taxonomy" id="5757"/>
</organismHost>
<dbReference type="EMBL" id="AY653733">
    <property type="protein sequence ID" value="AAV50344.1"/>
    <property type="molecule type" value="Genomic_DNA"/>
</dbReference>
<dbReference type="KEGG" id="vg:9924663"/>
<dbReference type="OrthoDB" id="22462at10239"/>
<dbReference type="Proteomes" id="UP000001134">
    <property type="component" value="Genome"/>
</dbReference>
<dbReference type="InterPro" id="IPR043908">
    <property type="entry name" value="DUF5769"/>
</dbReference>
<dbReference type="Pfam" id="PF19073">
    <property type="entry name" value="DUF5769"/>
    <property type="match status" value="2"/>
</dbReference>
<sequence length="312" mass="37008">MLSSYCNPNEPIPREIPSLKAHIFEYMYQYRNWSKFVGDVKKNHGSIDDLEFTITEFKHVHYMNVARVIVHGVEKFNKCCDNINNNDINLDCELTKNIQKHFQGCSEKIPQIYIYGNFCRSIVSGQLYDNINIMFHDDKCSEMFRQFCIPKNYICRNLQWNWSKGNVRGIDYELNFKGYNDYKVHLFLSWCNDMNIVPDNIYFDVDSLYSTISHENIHFMSSLKSLYPDCNVDKIIKNCTNNKFILLDNTKSPTITHPQPFVFSRNIHLKCINVNKEQHIKFLFLKMKSKGWKCLNEDCETPWCILQKDLLH</sequence>
<proteinExistence type="inferred from homology"/>
<name>YR069_MIMIV</name>
<accession>Q5UPE6</accession>
<reference key="1">
    <citation type="journal article" date="2004" name="Science">
        <title>The 1.2-megabase genome sequence of Mimivirus.</title>
        <authorList>
            <person name="Raoult D."/>
            <person name="Audic S."/>
            <person name="Robert C."/>
            <person name="Abergel C."/>
            <person name="Renesto P."/>
            <person name="Ogata H."/>
            <person name="La Scola B."/>
            <person name="Susan M."/>
            <person name="Claverie J.-M."/>
        </authorList>
    </citation>
    <scope>NUCLEOTIDE SEQUENCE [LARGE SCALE GENOMIC DNA]</scope>
    <source>
        <strain>Rowbotham-Bradford</strain>
    </source>
</reference>
<evidence type="ECO:0000305" key="1"/>